<accession>Q41261</accession>
<accession>Q9FPC9</accession>
<accession>Q9FPD0</accession>
<proteinExistence type="evidence at protein level"/>
<reference key="1">
    <citation type="journal article" date="1996" name="Nature">
        <title>Control of inflorescence architecture in Antirrhinum.</title>
        <authorList>
            <person name="Bradley D."/>
            <person name="Carpenter R."/>
            <person name="Copsey L."/>
            <person name="Vincent C."/>
            <person name="Rothstein S."/>
            <person name="Coen E.S."/>
        </authorList>
    </citation>
    <scope>NUCLEOTIDE SEQUENCE [MRNA]</scope>
</reference>
<reference key="2">
    <citation type="journal article" date="2001" name="Plant Physiol.">
        <title>The delayed terminal flower phenotype is caused by a conditional mutation in the CENTRORADIALIS gene of snapdragon.</title>
        <authorList>
            <person name="Cremer F."/>
            <person name="Loennig W.E."/>
            <person name="Saedler H."/>
            <person name="Huijser P."/>
        </authorList>
    </citation>
    <scope>NUCLEOTIDE SEQUENCE [GENOMIC DNA]</scope>
    <source>
        <strain>cv. 164</strain>
        <strain>cv. Snowman</strain>
    </source>
</reference>
<reference key="3">
    <citation type="journal article" date="2000" name="J. Mol. Biol.">
        <title>The structure of antirrhinum centroradialis protein (CEN) suggests a role as a kinase regulator.</title>
        <authorList>
            <person name="Banfield M.J."/>
            <person name="Brady R.L."/>
        </authorList>
    </citation>
    <scope>X-RAY CRYSTALLOGRAPHY (1.9 ANGSTROMS)</scope>
</reference>
<keyword id="KW-0002">3D-structure</keyword>
<keyword id="KW-0963">Cytoplasm</keyword>
<keyword id="KW-0217">Developmental protein</keyword>
<keyword id="KW-0221">Differentiation</keyword>
<keyword id="KW-0287">Flowering</keyword>
<sequence>MAAKVSSDPLVIGRVIGDVVDHFTSTVKMSVIYNSNNSIKHVYNGHELFPSAVTSTPRVEVHGGDMRSFFTLIMTDPDVPGPSDPYLREHLHWIVTDIPGTTDSSFGKEVVSYEMPRPNIGIHRFVFLLFKQKKRGQAMLSPPVVCRDGFNTRKFTQENELGLPVAAVFFNCQRETAARRR</sequence>
<organism>
    <name type="scientific">Antirrhinum majus</name>
    <name type="common">Garden snapdragon</name>
    <dbReference type="NCBI Taxonomy" id="4151"/>
    <lineage>
        <taxon>Eukaryota</taxon>
        <taxon>Viridiplantae</taxon>
        <taxon>Streptophyta</taxon>
        <taxon>Embryophyta</taxon>
        <taxon>Tracheophyta</taxon>
        <taxon>Spermatophyta</taxon>
        <taxon>Magnoliopsida</taxon>
        <taxon>eudicotyledons</taxon>
        <taxon>Gunneridae</taxon>
        <taxon>Pentapetalae</taxon>
        <taxon>asterids</taxon>
        <taxon>lamiids</taxon>
        <taxon>Lamiales</taxon>
        <taxon>Plantaginaceae</taxon>
        <taxon>Antirrhineae</taxon>
        <taxon>Antirrhinum</taxon>
    </lineage>
</organism>
<comment type="function">
    <text>Expression of CEN leads to a morphological switch between shoot growth and the development of flower structures (inflorescence). May form complexes with phosphorylated ligands by interfering with kinases and their effectors.</text>
</comment>
<comment type="subunit">
    <text>May form homodimers in solution.</text>
</comment>
<comment type="subcellular location">
    <subcellularLocation>
        <location>Cytoplasm</location>
    </subcellularLocation>
</comment>
<comment type="similarity">
    <text evidence="1">Belongs to the phosphatidylethanolamine-binding protein family.</text>
</comment>
<dbReference type="EMBL" id="S81193">
    <property type="protein sequence ID" value="AAB36112.1"/>
    <property type="molecule type" value="mRNA"/>
</dbReference>
<dbReference type="EMBL" id="AJ251993">
    <property type="protein sequence ID" value="CAC21563.1"/>
    <property type="molecule type" value="Genomic_DNA"/>
</dbReference>
<dbReference type="EMBL" id="AJ251994">
    <property type="protein sequence ID" value="CAC21564.1"/>
    <property type="molecule type" value="Genomic_DNA"/>
</dbReference>
<dbReference type="PIR" id="S68507">
    <property type="entry name" value="S68507"/>
</dbReference>
<dbReference type="PDB" id="1QOU">
    <property type="method" value="X-ray"/>
    <property type="resolution" value="1.90 A"/>
    <property type="chains" value="A/B=1-181"/>
</dbReference>
<dbReference type="PDBsum" id="1QOU"/>
<dbReference type="SMR" id="Q41261"/>
<dbReference type="EvolutionaryTrace" id="Q41261"/>
<dbReference type="GO" id="GO:0005737">
    <property type="term" value="C:cytoplasm"/>
    <property type="evidence" value="ECO:0007669"/>
    <property type="project" value="UniProtKB-SubCell"/>
</dbReference>
<dbReference type="GO" id="GO:0005634">
    <property type="term" value="C:nucleus"/>
    <property type="evidence" value="ECO:0007669"/>
    <property type="project" value="TreeGrafter"/>
</dbReference>
<dbReference type="GO" id="GO:0030154">
    <property type="term" value="P:cell differentiation"/>
    <property type="evidence" value="ECO:0007669"/>
    <property type="project" value="UniProtKB-KW"/>
</dbReference>
<dbReference type="GO" id="GO:0009908">
    <property type="term" value="P:flower development"/>
    <property type="evidence" value="ECO:0007669"/>
    <property type="project" value="UniProtKB-KW"/>
</dbReference>
<dbReference type="GO" id="GO:0009910">
    <property type="term" value="P:negative regulation of flower development"/>
    <property type="evidence" value="ECO:0007669"/>
    <property type="project" value="TreeGrafter"/>
</dbReference>
<dbReference type="GO" id="GO:0010228">
    <property type="term" value="P:vegetative to reproductive phase transition of meristem"/>
    <property type="evidence" value="ECO:0007669"/>
    <property type="project" value="TreeGrafter"/>
</dbReference>
<dbReference type="CDD" id="cd00866">
    <property type="entry name" value="PEBP_euk"/>
    <property type="match status" value="1"/>
</dbReference>
<dbReference type="FunFam" id="3.90.280.10:FF:000001">
    <property type="entry name" value="Terminal flower 1"/>
    <property type="match status" value="1"/>
</dbReference>
<dbReference type="Gene3D" id="3.90.280.10">
    <property type="entry name" value="PEBP-like"/>
    <property type="match status" value="1"/>
</dbReference>
<dbReference type="InterPro" id="IPR008914">
    <property type="entry name" value="PEBP"/>
</dbReference>
<dbReference type="InterPro" id="IPR036610">
    <property type="entry name" value="PEBP-like_sf"/>
</dbReference>
<dbReference type="InterPro" id="IPR035810">
    <property type="entry name" value="PEBP_euk"/>
</dbReference>
<dbReference type="InterPro" id="IPR001858">
    <property type="entry name" value="Phosphatidylethanolamine-bd_CS"/>
</dbReference>
<dbReference type="PANTHER" id="PTHR11362">
    <property type="entry name" value="PHOSPHATIDYLETHANOLAMINE-BINDING PROTEIN"/>
    <property type="match status" value="1"/>
</dbReference>
<dbReference type="PANTHER" id="PTHR11362:SF48">
    <property type="entry name" value="PROTEIN CENTRORADIALIS-LIKE"/>
    <property type="match status" value="1"/>
</dbReference>
<dbReference type="Pfam" id="PF01161">
    <property type="entry name" value="PBP"/>
    <property type="match status" value="1"/>
</dbReference>
<dbReference type="SUPFAM" id="SSF49777">
    <property type="entry name" value="PEBP-like"/>
    <property type="match status" value="1"/>
</dbReference>
<dbReference type="PROSITE" id="PS01220">
    <property type="entry name" value="PBP"/>
    <property type="match status" value="1"/>
</dbReference>
<evidence type="ECO:0000305" key="1"/>
<evidence type="ECO:0007829" key="2">
    <source>
        <dbReference type="PDB" id="1QOU"/>
    </source>
</evidence>
<feature type="chain" id="PRO_0000204755" description="Protein CENTRORADIALIS">
    <location>
        <begin position="1"/>
        <end position="181"/>
    </location>
</feature>
<feature type="sequence variant" description="In strain: cv. 164 and cv. Snowman.">
    <original>V</original>
    <variation>I</variation>
    <location>
        <position position="5"/>
    </location>
</feature>
<feature type="sequence variant" description="In strain: cv. Snowman.">
    <original>K</original>
    <variation>Q</variation>
    <location>
        <position position="28"/>
    </location>
</feature>
<feature type="sequence variant" description="In strain: cv. 164 and cv. Snowman.">
    <original>S</original>
    <variation>A</variation>
    <location>
        <position position="35"/>
    </location>
</feature>
<feature type="helix" evidence="2">
    <location>
        <begin position="9"/>
        <end position="12"/>
    </location>
</feature>
<feature type="turn" evidence="2">
    <location>
        <begin position="17"/>
        <end position="19"/>
    </location>
</feature>
<feature type="strand" evidence="2">
    <location>
        <begin position="29"/>
        <end position="33"/>
    </location>
</feature>
<feature type="helix" evidence="2">
    <location>
        <begin position="50"/>
        <end position="52"/>
    </location>
</feature>
<feature type="strand" evidence="2">
    <location>
        <begin position="53"/>
        <end position="55"/>
    </location>
</feature>
<feature type="strand" evidence="2">
    <location>
        <begin position="58"/>
        <end position="61"/>
    </location>
</feature>
<feature type="strand" evidence="2">
    <location>
        <begin position="69"/>
        <end position="76"/>
    </location>
</feature>
<feature type="strand" evidence="2">
    <location>
        <begin position="82"/>
        <end position="84"/>
    </location>
</feature>
<feature type="strand" evidence="2">
    <location>
        <begin position="90"/>
        <end position="99"/>
    </location>
</feature>
<feature type="helix" evidence="2">
    <location>
        <begin position="104"/>
        <end position="106"/>
    </location>
</feature>
<feature type="strand" evidence="2">
    <location>
        <begin position="107"/>
        <end position="111"/>
    </location>
</feature>
<feature type="strand" evidence="2">
    <location>
        <begin position="123"/>
        <end position="131"/>
    </location>
</feature>
<feature type="helix" evidence="2">
    <location>
        <begin position="152"/>
        <end position="158"/>
    </location>
</feature>
<feature type="strand" evidence="2">
    <location>
        <begin position="165"/>
        <end position="172"/>
    </location>
</feature>
<name>CEN_ANTMA</name>
<protein>
    <recommendedName>
        <fullName>Protein CENTRORADIALIS</fullName>
    </recommendedName>
</protein>
<gene>
    <name type="primary">CEN</name>
</gene>